<protein>
    <recommendedName>
        <fullName evidence="1">4-hydroxybenzoate octaprenyltransferase</fullName>
        <ecNumber evidence="1">2.5.1.39</ecNumber>
    </recommendedName>
    <alternativeName>
        <fullName evidence="1">4-HB polyprenyltransferase</fullName>
    </alternativeName>
</protein>
<gene>
    <name evidence="1" type="primary">ubiA</name>
    <name type="ordered locus">PXO_02871</name>
</gene>
<evidence type="ECO:0000255" key="1">
    <source>
        <dbReference type="HAMAP-Rule" id="MF_01635"/>
    </source>
</evidence>
<dbReference type="EC" id="2.5.1.39" evidence="1"/>
<dbReference type="EMBL" id="CP000967">
    <property type="protein sequence ID" value="ACD61345.1"/>
    <property type="molecule type" value="Genomic_DNA"/>
</dbReference>
<dbReference type="RefSeq" id="WP_011257385.1">
    <property type="nucleotide sequence ID" value="NC_010717.2"/>
</dbReference>
<dbReference type="SMR" id="B2SS70"/>
<dbReference type="KEGG" id="xop:PXO_02871"/>
<dbReference type="eggNOG" id="COG0382">
    <property type="taxonomic scope" value="Bacteria"/>
</dbReference>
<dbReference type="HOGENOM" id="CLU_034879_1_0_6"/>
<dbReference type="UniPathway" id="UPA00232"/>
<dbReference type="Proteomes" id="UP000001740">
    <property type="component" value="Chromosome"/>
</dbReference>
<dbReference type="GO" id="GO:0005886">
    <property type="term" value="C:plasma membrane"/>
    <property type="evidence" value="ECO:0007669"/>
    <property type="project" value="UniProtKB-SubCell"/>
</dbReference>
<dbReference type="GO" id="GO:0008412">
    <property type="term" value="F:4-hydroxybenzoate polyprenyltransferase activity"/>
    <property type="evidence" value="ECO:0007669"/>
    <property type="project" value="UniProtKB-UniRule"/>
</dbReference>
<dbReference type="GO" id="GO:0006744">
    <property type="term" value="P:ubiquinone biosynthetic process"/>
    <property type="evidence" value="ECO:0007669"/>
    <property type="project" value="UniProtKB-UniRule"/>
</dbReference>
<dbReference type="CDD" id="cd13959">
    <property type="entry name" value="PT_UbiA_COQ2"/>
    <property type="match status" value="1"/>
</dbReference>
<dbReference type="FunFam" id="1.10.357.140:FF:000002">
    <property type="entry name" value="4-hydroxybenzoate octaprenyltransferase"/>
    <property type="match status" value="1"/>
</dbReference>
<dbReference type="FunFam" id="1.20.120.1780:FF:000001">
    <property type="entry name" value="4-hydroxybenzoate octaprenyltransferase"/>
    <property type="match status" value="1"/>
</dbReference>
<dbReference type="Gene3D" id="1.10.357.140">
    <property type="entry name" value="UbiA prenyltransferase"/>
    <property type="match status" value="1"/>
</dbReference>
<dbReference type="Gene3D" id="1.20.120.1780">
    <property type="entry name" value="UbiA prenyltransferase"/>
    <property type="match status" value="1"/>
</dbReference>
<dbReference type="HAMAP" id="MF_01635">
    <property type="entry name" value="UbiA"/>
    <property type="match status" value="1"/>
</dbReference>
<dbReference type="InterPro" id="IPR006370">
    <property type="entry name" value="HB_polyprenyltransferase-like"/>
</dbReference>
<dbReference type="InterPro" id="IPR039653">
    <property type="entry name" value="Prenyltransferase"/>
</dbReference>
<dbReference type="InterPro" id="IPR000537">
    <property type="entry name" value="UbiA_prenyltransferase"/>
</dbReference>
<dbReference type="InterPro" id="IPR030470">
    <property type="entry name" value="UbiA_prenylTrfase_CS"/>
</dbReference>
<dbReference type="InterPro" id="IPR044878">
    <property type="entry name" value="UbiA_sf"/>
</dbReference>
<dbReference type="NCBIfam" id="TIGR01474">
    <property type="entry name" value="ubiA_proteo"/>
    <property type="match status" value="1"/>
</dbReference>
<dbReference type="PANTHER" id="PTHR11048:SF28">
    <property type="entry name" value="4-HYDROXYBENZOATE POLYPRENYLTRANSFERASE, MITOCHONDRIAL"/>
    <property type="match status" value="1"/>
</dbReference>
<dbReference type="PANTHER" id="PTHR11048">
    <property type="entry name" value="PRENYLTRANSFERASES"/>
    <property type="match status" value="1"/>
</dbReference>
<dbReference type="Pfam" id="PF01040">
    <property type="entry name" value="UbiA"/>
    <property type="match status" value="1"/>
</dbReference>
<dbReference type="PROSITE" id="PS00943">
    <property type="entry name" value="UBIA"/>
    <property type="match status" value="1"/>
</dbReference>
<comment type="function">
    <text evidence="1">Catalyzes the prenylation of para-hydroxybenzoate (PHB) with an all-trans polyprenyl group. Mediates the second step in the final reaction sequence of ubiquinone-8 (UQ-8) biosynthesis, which is the condensation of the polyisoprenoid side chain with PHB, generating the first membrane-bound Q intermediate 3-octaprenyl-4-hydroxybenzoate.</text>
</comment>
<comment type="catalytic activity">
    <reaction evidence="1">
        <text>all-trans-octaprenyl diphosphate + 4-hydroxybenzoate = 4-hydroxy-3-(all-trans-octaprenyl)benzoate + diphosphate</text>
        <dbReference type="Rhea" id="RHEA:27782"/>
        <dbReference type="ChEBI" id="CHEBI:1617"/>
        <dbReference type="ChEBI" id="CHEBI:17879"/>
        <dbReference type="ChEBI" id="CHEBI:33019"/>
        <dbReference type="ChEBI" id="CHEBI:57711"/>
        <dbReference type="EC" id="2.5.1.39"/>
    </reaction>
</comment>
<comment type="cofactor">
    <cofactor evidence="1">
        <name>Mg(2+)</name>
        <dbReference type="ChEBI" id="CHEBI:18420"/>
    </cofactor>
</comment>
<comment type="pathway">
    <text evidence="1">Cofactor biosynthesis; ubiquinone biosynthesis.</text>
</comment>
<comment type="subcellular location">
    <subcellularLocation>
        <location evidence="1">Cell inner membrane</location>
        <topology evidence="1">Multi-pass membrane protein</topology>
    </subcellularLocation>
</comment>
<comment type="similarity">
    <text evidence="1">Belongs to the UbiA prenyltransferase family.</text>
</comment>
<proteinExistence type="inferred from homology"/>
<keyword id="KW-0997">Cell inner membrane</keyword>
<keyword id="KW-1003">Cell membrane</keyword>
<keyword id="KW-0460">Magnesium</keyword>
<keyword id="KW-0472">Membrane</keyword>
<keyword id="KW-0808">Transferase</keyword>
<keyword id="KW-0812">Transmembrane</keyword>
<keyword id="KW-1133">Transmembrane helix</keyword>
<keyword id="KW-0831">Ubiquinone biosynthesis</keyword>
<name>UBIA_XANOP</name>
<organism>
    <name type="scientific">Xanthomonas oryzae pv. oryzae (strain PXO99A)</name>
    <dbReference type="NCBI Taxonomy" id="360094"/>
    <lineage>
        <taxon>Bacteria</taxon>
        <taxon>Pseudomonadati</taxon>
        <taxon>Pseudomonadota</taxon>
        <taxon>Gammaproteobacteria</taxon>
        <taxon>Lysobacterales</taxon>
        <taxon>Lysobacteraceae</taxon>
        <taxon>Xanthomonas</taxon>
    </lineage>
</organism>
<feature type="chain" id="PRO_1000186698" description="4-hydroxybenzoate octaprenyltransferase">
    <location>
        <begin position="1"/>
        <end position="299"/>
    </location>
</feature>
<feature type="transmembrane region" description="Helical" evidence="1">
    <location>
        <begin position="34"/>
        <end position="54"/>
    </location>
</feature>
<feature type="transmembrane region" description="Helical" evidence="1">
    <location>
        <begin position="57"/>
        <end position="77"/>
    </location>
</feature>
<feature type="transmembrane region" description="Helical" evidence="1">
    <location>
        <begin position="108"/>
        <end position="128"/>
    </location>
</feature>
<feature type="transmembrane region" description="Helical" evidence="1">
    <location>
        <begin position="163"/>
        <end position="183"/>
    </location>
</feature>
<feature type="transmembrane region" description="Helical" evidence="1">
    <location>
        <begin position="221"/>
        <end position="241"/>
    </location>
</feature>
<feature type="transmembrane region" description="Helical" evidence="1">
    <location>
        <begin position="245"/>
        <end position="265"/>
    </location>
</feature>
<feature type="transmembrane region" description="Helical" evidence="1">
    <location>
        <begin position="277"/>
        <end position="297"/>
    </location>
</feature>
<accession>B2SS70</accession>
<sequence length="299" mass="33271">MSKHDVERLPAACGLTCPQRLGQYWQLVRGDRPIGSLLLLWPTWWALWLAADGLPPLWTLFVFTAGVWLTRSAGCVINDYADRWLDPHVERTKSRPLATGAVSGREALWVFVVLMLVAFALVFTLNWLTVLLSVPGVFLAASYPYLKRHTHLPQVYLGMAFGWGIPMAFAAVQGSVPVLGWLLYAANILWATAYDTWYAMVDRDDDIRMGSKSTAILFGRFDLVAQGILYALMFAVLALVDLRADLGAAYWAGLGVAALLVAYEFRIARHRERGPCFRAFLHNNWVGLAIFVGIAVAGR</sequence>
<reference key="1">
    <citation type="journal article" date="2008" name="BMC Genomics">
        <title>Genome sequence and rapid evolution of the rice pathogen Xanthomonas oryzae pv. oryzae PXO99A.</title>
        <authorList>
            <person name="Salzberg S.L."/>
            <person name="Sommer D.D."/>
            <person name="Schatz M.C."/>
            <person name="Phillippy A.M."/>
            <person name="Rabinowicz P.D."/>
            <person name="Tsuge S."/>
            <person name="Furutani A."/>
            <person name="Ochiai H."/>
            <person name="Delcher A.L."/>
            <person name="Kelley D."/>
            <person name="Madupu R."/>
            <person name="Puiu D."/>
            <person name="Radune D."/>
            <person name="Shumway M."/>
            <person name="Trapnell C."/>
            <person name="Aparna G."/>
            <person name="Jha G."/>
            <person name="Pandey A."/>
            <person name="Patil P.B."/>
            <person name="Ishihara H."/>
            <person name="Meyer D.F."/>
            <person name="Szurek B."/>
            <person name="Verdier V."/>
            <person name="Koebnik R."/>
            <person name="Dow J.M."/>
            <person name="Ryan R.P."/>
            <person name="Hirata H."/>
            <person name="Tsuyumu S."/>
            <person name="Won Lee S."/>
            <person name="Seo Y.-S."/>
            <person name="Sriariyanum M."/>
            <person name="Ronald P.C."/>
            <person name="Sonti R.V."/>
            <person name="Van Sluys M.-A."/>
            <person name="Leach J.E."/>
            <person name="White F.F."/>
            <person name="Bogdanove A.J."/>
        </authorList>
    </citation>
    <scope>NUCLEOTIDE SEQUENCE [LARGE SCALE GENOMIC DNA]</scope>
    <source>
        <strain>PXO99A</strain>
    </source>
</reference>